<protein>
    <recommendedName>
        <fullName>Mite allergen Blo t 5</fullName>
    </recommendedName>
    <allergenName evidence="7">Blo t 5</allergenName>
</protein>
<accession>O96870</accession>
<accession>A7IZF6</accession>
<accession>A7IZF7</accession>
<accession>A7IZG4</accession>
<accession>Q17283</accession>
<name>ALL5_BLOTA</name>
<comment type="subunit">
    <text evidence="2">May exist as homodimer and homotrimer.</text>
</comment>
<comment type="tissue specificity">
    <text evidence="2">Midgut and hindgut contents as well as fecal pellets (at protein level).</text>
</comment>
<comment type="allergen">
    <text evidence="2 4 5 6">Causes an allergic reaction in human. Binds to IgE. Common symptoms of mite allergy are bronchial asthma, allergic rhinitis and conjunctivitis.</text>
</comment>
<comment type="similarity">
    <text evidence="8">Belongs to the mite group 5 allergen family.</text>
</comment>
<comment type="sequence caution" evidence="8">
    <conflict type="frameshift">
        <sequence resource="EMBL-CDS" id="AAB49396"/>
    </conflict>
</comment>
<feature type="signal peptide" evidence="1">
    <location>
        <begin position="1"/>
        <end position="17"/>
    </location>
</feature>
<feature type="chain" id="PRO_0000151065" description="Mite allergen Blo t 5" evidence="1">
    <location>
        <begin position="18"/>
        <end position="134"/>
    </location>
</feature>
<feature type="coiled-coil region" evidence="3">
    <location>
        <begin position="18"/>
        <end position="113"/>
    </location>
</feature>
<feature type="sequence conflict" description="In Ref. 2; ABH06352." evidence="8" ref="2">
    <original>E</original>
    <variation>G</variation>
    <location>
        <position position="19"/>
    </location>
</feature>
<feature type="sequence conflict" description="In Ref. 2; ABH06359." evidence="8" ref="2">
    <original>K</original>
    <variation>E</variation>
    <location>
        <position position="23"/>
    </location>
</feature>
<feature type="sequence conflict" description="In Ref. 3; AAB49396." evidence="8" ref="3">
    <original>Q</original>
    <variation>P</variation>
    <location>
        <position position="126"/>
    </location>
</feature>
<feature type="helix" evidence="12">
    <location>
        <begin position="35"/>
        <end position="63"/>
    </location>
</feature>
<feature type="helix" evidence="12">
    <location>
        <begin position="66"/>
        <end position="94"/>
    </location>
</feature>
<feature type="helix" evidence="12">
    <location>
        <begin position="101"/>
        <end position="130"/>
    </location>
</feature>
<reference key="1">
    <citation type="journal article" date="1997" name="Am. J. Respir. Crit. Care Med.">
        <title>Sensitization to Blomia tropicalis in patients with asthma and identification of allergen Blo t 5.</title>
        <authorList>
            <person name="Arruda L.K."/>
            <person name="Vailes L.D."/>
            <person name="Platts-Mills T.A.E."/>
            <person name="Fernandez-Caldas E."/>
            <person name="Montealegre F."/>
            <person name="Lin K.-L."/>
            <person name="Chua K.-Y."/>
            <person name="Rizzo M.C."/>
            <person name="Naspitz C.K."/>
            <person name="Chapman M.D."/>
        </authorList>
    </citation>
    <scope>NUCLEOTIDE SEQUENCE [MRNA]</scope>
    <scope>ALLERGEN</scope>
</reference>
<reference evidence="9 10" key="2">
    <citation type="journal article" date="2007" name="J. Allergy Clin. Immunol.">
        <title>Identification and characterization of a novel allergen from Blomia tropicalis: Blo t 21.</title>
        <authorList>
            <person name="Gao Y.F."/>
            <person name="Wang D.Y."/>
            <person name="Ong T.C."/>
            <person name="Tay S.L."/>
            <person name="Yap K.H."/>
            <person name="Chew F.T."/>
        </authorList>
    </citation>
    <scope>NUCLEOTIDE SEQUENCE [GENOMIC DNA]</scope>
    <scope>SUBUNIT</scope>
    <scope>TISSUE SPECIFICITY</scope>
    <scope>ALLERGEN</scope>
    <scope>CIRCULAR DICHROISM ANALYSIS</scope>
</reference>
<reference key="3">
    <citation type="journal article" date="1996" name="J. Allergy Clin. Immunol.">
        <title>Cloning and expression of complementary DNA coding for an allergen with common antibody-binding specificities with three allergens of the house dust mite Blomia tropicalis.</title>
        <authorList>
            <person name="Caraballo L."/>
            <person name="Avjioglu A."/>
            <person name="Marrugo J."/>
            <person name="Puerta L."/>
            <person name="Marsh D."/>
        </authorList>
    </citation>
    <scope>NUCLEOTIDE SEQUENCE [GENOMIC DNA] OF 63-134</scope>
    <scope>ALLERGEN</scope>
</reference>
<reference key="4">
    <citation type="journal article" date="2013" name="BMC Immunol.">
        <title>Blomia tropicalis Blo t 5 and Blo t 21 recombinant allergens might confer higher specificity to serodiagnostic assays than whole mite extract.</title>
        <authorList>
            <person name="dos Anjos Carvalho K."/>
            <person name="de Melo-Neto O.P."/>
            <person name="Magalhaes F.B."/>
            <person name="Ponte J.C."/>
            <person name="Felipe F.A."/>
            <person name="dos Santos M.C."/>
            <person name="dos Santos Lima G."/>
            <person name="Cruz A.A."/>
            <person name="Pinheiro C.S."/>
            <person name="Pontes-de-Carvalho L.C."/>
            <person name="Alcantara-Neves N.M."/>
        </authorList>
    </citation>
    <scope>ALLERGEN</scope>
</reference>
<reference evidence="11" key="5">
    <citation type="journal article" date="2008" name="Structure">
        <title>Roles of structure and structural dynamics in the antibody recognition of the allergen proteins: an NMR study on Blomia tropicalis major allergen.</title>
        <authorList>
            <person name="Naik M.T."/>
            <person name="Chang C.-F."/>
            <person name="Kuo I.-C."/>
            <person name="Kung C.C."/>
            <person name="Yi F.-C."/>
            <person name="Chua K.Y."/>
            <person name="Huang T.-H."/>
        </authorList>
    </citation>
    <scope>STRUCTURE BY NMR OF 18-134</scope>
    <scope>COILED-COIL DOMAIN</scope>
</reference>
<evidence type="ECO:0000255" key="1"/>
<evidence type="ECO:0000269" key="2">
    <source>
    </source>
</evidence>
<evidence type="ECO:0000269" key="3">
    <source>
    </source>
</evidence>
<evidence type="ECO:0000269" key="4">
    <source>
    </source>
</evidence>
<evidence type="ECO:0000269" key="5">
    <source>
    </source>
</evidence>
<evidence type="ECO:0000269" key="6">
    <source>
    </source>
</evidence>
<evidence type="ECO:0000303" key="7">
    <source>
    </source>
</evidence>
<evidence type="ECO:0000305" key="8"/>
<evidence type="ECO:0000312" key="9">
    <source>
        <dbReference type="EMBL" id="ABH06351.1"/>
    </source>
</evidence>
<evidence type="ECO:0000312" key="10">
    <source>
        <dbReference type="EMBL" id="ABH06352.1"/>
    </source>
</evidence>
<evidence type="ECO:0000312" key="11">
    <source>
        <dbReference type="PDB" id="2JMH"/>
    </source>
</evidence>
<evidence type="ECO:0007829" key="12">
    <source>
        <dbReference type="PDB" id="2JMH"/>
    </source>
</evidence>
<gene>
    <name type="primary">BLOT5</name>
</gene>
<sequence length="134" mass="15642">MKFAIVLIACFAASVLAQEHKPKKDDFRNEFDHLLIEQANHAIEKGEHQLLYLQHQLDELNENKSKELQEKIIRELDVVCAMIEGAQGALERELKRTDLNILERFNYEEAQTLSKILLKDLKETEQKVKDIQTQ</sequence>
<proteinExistence type="evidence at protein level"/>
<dbReference type="EMBL" id="U59102">
    <property type="protein sequence ID" value="AAD10850.1"/>
    <property type="molecule type" value="mRNA"/>
</dbReference>
<dbReference type="EMBL" id="DQ788691">
    <property type="protein sequence ID" value="ABH06358.1"/>
    <property type="molecule type" value="Genomic_DNA"/>
</dbReference>
<dbReference type="EMBL" id="DQ788684">
    <property type="protein sequence ID" value="ABH06351.1"/>
    <property type="molecule type" value="Genomic_DNA"/>
</dbReference>
<dbReference type="EMBL" id="DQ788685">
    <property type="protein sequence ID" value="ABH06352.1"/>
    <property type="molecule type" value="Genomic_DNA"/>
</dbReference>
<dbReference type="EMBL" id="DQ788686">
    <property type="protein sequence ID" value="ABH06353.1"/>
    <property type="molecule type" value="Genomic_DNA"/>
</dbReference>
<dbReference type="EMBL" id="DQ788687">
    <property type="protein sequence ID" value="ABH06354.1"/>
    <property type="molecule type" value="Genomic_DNA"/>
</dbReference>
<dbReference type="EMBL" id="DQ788688">
    <property type="protein sequence ID" value="ABH06355.1"/>
    <property type="molecule type" value="Genomic_DNA"/>
</dbReference>
<dbReference type="EMBL" id="DQ788689">
    <property type="protein sequence ID" value="ABH06356.1"/>
    <property type="molecule type" value="Genomic_DNA"/>
</dbReference>
<dbReference type="EMBL" id="DQ788690">
    <property type="protein sequence ID" value="ABH06357.1"/>
    <property type="molecule type" value="Genomic_DNA"/>
</dbReference>
<dbReference type="EMBL" id="DQ788692">
    <property type="protein sequence ID" value="ABH06359.1"/>
    <property type="molecule type" value="Genomic_DNA"/>
</dbReference>
<dbReference type="EMBL" id="U27702">
    <property type="protein sequence ID" value="AAB49396.1"/>
    <property type="status" value="ALT_FRAME"/>
    <property type="molecule type" value="Genomic_DNA"/>
</dbReference>
<dbReference type="PDB" id="2JMH">
    <property type="method" value="NMR"/>
    <property type="chains" value="A=18-134"/>
</dbReference>
<dbReference type="PDB" id="2JRK">
    <property type="method" value="NMR"/>
    <property type="chains" value="A=23-134"/>
</dbReference>
<dbReference type="PDB" id="2MEY">
    <property type="method" value="NMR"/>
    <property type="chains" value="A=18-134"/>
</dbReference>
<dbReference type="PDBsum" id="2JMH"/>
<dbReference type="PDBsum" id="2JRK"/>
<dbReference type="PDBsum" id="2MEY"/>
<dbReference type="BMRB" id="O96870"/>
<dbReference type="SMR" id="O96870"/>
<dbReference type="Allergome" id="152">
    <property type="allergen name" value="Blo t 5"/>
</dbReference>
<dbReference type="Allergome" id="3155">
    <property type="allergen name" value="Blo t 5.0101"/>
</dbReference>
<dbReference type="Allergome" id="3568">
    <property type="allergen name" value="Blo t 21"/>
</dbReference>
<dbReference type="OrthoDB" id="6496220at2759"/>
<dbReference type="EvolutionaryTrace" id="O96870"/>
<dbReference type="GO" id="GO:0042803">
    <property type="term" value="F:protein homodimerization activity"/>
    <property type="evidence" value="ECO:0000314"/>
    <property type="project" value="UniProtKB"/>
</dbReference>
<dbReference type="GO" id="GO:0070207">
    <property type="term" value="P:protein homotrimerization"/>
    <property type="evidence" value="ECO:0000314"/>
    <property type="project" value="UniProtKB"/>
</dbReference>
<dbReference type="FunFam" id="1.20.58.970:FF:000001">
    <property type="entry name" value="Mite allergen Blo t 5"/>
    <property type="match status" value="1"/>
</dbReference>
<dbReference type="Gene3D" id="1.20.58.970">
    <property type="match status" value="1"/>
</dbReference>
<dbReference type="InterPro" id="IPR020306">
    <property type="entry name" value="Mite_allergen_group-5/21"/>
</dbReference>
<dbReference type="InterPro" id="IPR038455">
    <property type="entry name" value="Mite_allergen_group-5/21_sf"/>
</dbReference>
<dbReference type="Pfam" id="PF11642">
    <property type="entry name" value="Blo-t-5"/>
    <property type="match status" value="1"/>
</dbReference>
<keyword id="KW-0002">3D-structure</keyword>
<keyword id="KW-0020">Allergen</keyword>
<keyword id="KW-0175">Coiled coil</keyword>
<keyword id="KW-0732">Signal</keyword>
<organism>
    <name type="scientific">Blomia tropicalis</name>
    <name type="common">Mite</name>
    <dbReference type="NCBI Taxonomy" id="40697"/>
    <lineage>
        <taxon>Eukaryota</taxon>
        <taxon>Metazoa</taxon>
        <taxon>Ecdysozoa</taxon>
        <taxon>Arthropoda</taxon>
        <taxon>Chelicerata</taxon>
        <taxon>Arachnida</taxon>
        <taxon>Acari</taxon>
        <taxon>Acariformes</taxon>
        <taxon>Sarcoptiformes</taxon>
        <taxon>Astigmata</taxon>
        <taxon>Glycyphagoidea</taxon>
        <taxon>Echimyopodidae</taxon>
        <taxon>Blomia</taxon>
    </lineage>
</organism>